<feature type="signal peptide" evidence="2">
    <location>
        <begin position="1"/>
        <end position="19"/>
    </location>
</feature>
<feature type="chain" id="PRO_0000323707" description="Lymphocyte antigen 6 complex locus protein G6d">
    <location>
        <begin position="20"/>
        <end position="104"/>
    </location>
</feature>
<feature type="propeptide" id="PRO_0000323708" description="Removed in mature form" evidence="2">
    <location>
        <begin position="105"/>
        <end position="133"/>
    </location>
</feature>
<feature type="domain" description="UPAR/Ly6">
    <location>
        <begin position="22"/>
        <end position="116"/>
    </location>
</feature>
<feature type="lipid moiety-binding region" description="GPI-anchor amidated serine" evidence="2">
    <location>
        <position position="104"/>
    </location>
</feature>
<feature type="glycosylation site" description="O-linked (GalNAc...) threonine" evidence="2">
    <location>
        <position position="40"/>
    </location>
</feature>
<feature type="glycosylation site" description="O-linked (GalNAc...) threonine" evidence="2">
    <location>
        <position position="41"/>
    </location>
</feature>
<feature type="disulfide bond" evidence="1">
    <location>
        <begin position="27"/>
        <end position="35"/>
    </location>
</feature>
<feature type="disulfide bond" evidence="1">
    <location>
        <begin position="42"/>
        <end position="71"/>
    </location>
</feature>
<feature type="disulfide bond" evidence="1">
    <location>
        <begin position="77"/>
        <end position="96"/>
    </location>
</feature>
<feature type="sequence variant" id="VAR_039564" description="In dbSNP:rs3749952.">
    <original>L</original>
    <variation>V</variation>
    <location>
        <position position="9"/>
    </location>
</feature>
<feature type="sequence variant" id="VAR_039565" description="In dbSNP:rs9267550.">
    <original>S</original>
    <variation>T</variation>
    <location>
        <position position="34"/>
    </location>
</feature>
<feature type="turn" evidence="5">
    <location>
        <begin position="99"/>
        <end position="101"/>
    </location>
</feature>
<name>LY66D_HUMAN</name>
<reference key="1">
    <citation type="journal article" date="2002" name="Genomics">
        <title>Transcriptional analysis of a novel cluster of LY-6 family members in the human and mouse major histocompatibility complex: five genes with many splice forms.</title>
        <authorList>
            <person name="Mallya M."/>
            <person name="Campbell R.D."/>
            <person name="Aguado B."/>
        </authorList>
    </citation>
    <scope>NUCLEOTIDE SEQUENCE [MRNA]</scope>
    <scope>TISSUE SPECIFICITY</scope>
</reference>
<reference key="2">
    <citation type="journal article" date="1999" name="J. Immunol.">
        <title>Genes encoding three new members of the leukocyte antigen 6 superfamily and a novel member of Ig superfamily, together with genes encoding the regulatory nuclear chloride ion channel protein (hRNCC) and an N omega-N omega-dimethylarginine dimethylaminohydrolase homologue, are found in a 30-kb segment of the MHC class III region.</title>
        <authorList>
            <person name="Ribas G."/>
            <person name="Neville M."/>
            <person name="Wixon J.L."/>
            <person name="Cheng J."/>
            <person name="Campbell R.D."/>
        </authorList>
    </citation>
    <scope>NUCLEOTIDE SEQUENCE [GENOMIC DNA]</scope>
</reference>
<reference key="3">
    <citation type="journal article" date="2003" name="Genome Res.">
        <title>Analysis of the gene-dense major histocompatibility complex class III region and its comparison to mouse.</title>
        <authorList>
            <person name="Xie T."/>
            <person name="Rowen L."/>
            <person name="Aguado B."/>
            <person name="Ahearn M.E."/>
            <person name="Madan A."/>
            <person name="Qin S."/>
            <person name="Campbell R.D."/>
            <person name="Hood L."/>
        </authorList>
    </citation>
    <scope>NUCLEOTIDE SEQUENCE [LARGE SCALE GENOMIC DNA]</scope>
</reference>
<reference key="4">
    <citation type="submission" date="2004-12" db="EMBL/GenBank/DDBJ databases">
        <title>Homo sapiens 2,229,817bp genomic DNA of 6p21.3 HLA class I region.</title>
        <authorList>
            <person name="Shiina S."/>
            <person name="Tamiya G."/>
            <person name="Oka A."/>
            <person name="Inoko H."/>
        </authorList>
    </citation>
    <scope>NUCLEOTIDE SEQUENCE [LARGE SCALE GENOMIC DNA]</scope>
</reference>
<reference key="5">
    <citation type="journal article" date="2003" name="Nature">
        <title>The DNA sequence and analysis of human chromosome 6.</title>
        <authorList>
            <person name="Mungall A.J."/>
            <person name="Palmer S.A."/>
            <person name="Sims S.K."/>
            <person name="Edwards C.A."/>
            <person name="Ashurst J.L."/>
            <person name="Wilming L."/>
            <person name="Jones M.C."/>
            <person name="Horton R."/>
            <person name="Hunt S.E."/>
            <person name="Scott C.E."/>
            <person name="Gilbert J.G.R."/>
            <person name="Clamp M.E."/>
            <person name="Bethel G."/>
            <person name="Milne S."/>
            <person name="Ainscough R."/>
            <person name="Almeida J.P."/>
            <person name="Ambrose K.D."/>
            <person name="Andrews T.D."/>
            <person name="Ashwell R.I.S."/>
            <person name="Babbage A.K."/>
            <person name="Bagguley C.L."/>
            <person name="Bailey J."/>
            <person name="Banerjee R."/>
            <person name="Barker D.J."/>
            <person name="Barlow K.F."/>
            <person name="Bates K."/>
            <person name="Beare D.M."/>
            <person name="Beasley H."/>
            <person name="Beasley O."/>
            <person name="Bird C.P."/>
            <person name="Blakey S.E."/>
            <person name="Bray-Allen S."/>
            <person name="Brook J."/>
            <person name="Brown A.J."/>
            <person name="Brown J.Y."/>
            <person name="Burford D.C."/>
            <person name="Burrill W."/>
            <person name="Burton J."/>
            <person name="Carder C."/>
            <person name="Carter N.P."/>
            <person name="Chapman J.C."/>
            <person name="Clark S.Y."/>
            <person name="Clark G."/>
            <person name="Clee C.M."/>
            <person name="Clegg S."/>
            <person name="Cobley V."/>
            <person name="Collier R.E."/>
            <person name="Collins J.E."/>
            <person name="Colman L.K."/>
            <person name="Corby N.R."/>
            <person name="Coville G.J."/>
            <person name="Culley K.M."/>
            <person name="Dhami P."/>
            <person name="Davies J."/>
            <person name="Dunn M."/>
            <person name="Earthrowl M.E."/>
            <person name="Ellington A.E."/>
            <person name="Evans K.A."/>
            <person name="Faulkner L."/>
            <person name="Francis M.D."/>
            <person name="Frankish A."/>
            <person name="Frankland J."/>
            <person name="French L."/>
            <person name="Garner P."/>
            <person name="Garnett J."/>
            <person name="Ghori M.J."/>
            <person name="Gilby L.M."/>
            <person name="Gillson C.J."/>
            <person name="Glithero R.J."/>
            <person name="Grafham D.V."/>
            <person name="Grant M."/>
            <person name="Gribble S."/>
            <person name="Griffiths C."/>
            <person name="Griffiths M.N.D."/>
            <person name="Hall R."/>
            <person name="Halls K.S."/>
            <person name="Hammond S."/>
            <person name="Harley J.L."/>
            <person name="Hart E.A."/>
            <person name="Heath P.D."/>
            <person name="Heathcott R."/>
            <person name="Holmes S.J."/>
            <person name="Howden P.J."/>
            <person name="Howe K.L."/>
            <person name="Howell G.R."/>
            <person name="Huckle E."/>
            <person name="Humphray S.J."/>
            <person name="Humphries M.D."/>
            <person name="Hunt A.R."/>
            <person name="Johnson C.M."/>
            <person name="Joy A.A."/>
            <person name="Kay M."/>
            <person name="Keenan S.J."/>
            <person name="Kimberley A.M."/>
            <person name="King A."/>
            <person name="Laird G.K."/>
            <person name="Langford C."/>
            <person name="Lawlor S."/>
            <person name="Leongamornlert D.A."/>
            <person name="Leversha M."/>
            <person name="Lloyd C.R."/>
            <person name="Lloyd D.M."/>
            <person name="Loveland J.E."/>
            <person name="Lovell J."/>
            <person name="Martin S."/>
            <person name="Mashreghi-Mohammadi M."/>
            <person name="Maslen G.L."/>
            <person name="Matthews L."/>
            <person name="McCann O.T."/>
            <person name="McLaren S.J."/>
            <person name="McLay K."/>
            <person name="McMurray A."/>
            <person name="Moore M.J.F."/>
            <person name="Mullikin J.C."/>
            <person name="Niblett D."/>
            <person name="Nickerson T."/>
            <person name="Novik K.L."/>
            <person name="Oliver K."/>
            <person name="Overton-Larty E.K."/>
            <person name="Parker A."/>
            <person name="Patel R."/>
            <person name="Pearce A.V."/>
            <person name="Peck A.I."/>
            <person name="Phillimore B.J.C.T."/>
            <person name="Phillips S."/>
            <person name="Plumb R.W."/>
            <person name="Porter K.M."/>
            <person name="Ramsey Y."/>
            <person name="Ranby S.A."/>
            <person name="Rice C.M."/>
            <person name="Ross M.T."/>
            <person name="Searle S.M."/>
            <person name="Sehra H.K."/>
            <person name="Sheridan E."/>
            <person name="Skuce C.D."/>
            <person name="Smith S."/>
            <person name="Smith M."/>
            <person name="Spraggon L."/>
            <person name="Squares S.L."/>
            <person name="Steward C.A."/>
            <person name="Sycamore N."/>
            <person name="Tamlyn-Hall G."/>
            <person name="Tester J."/>
            <person name="Theaker A.J."/>
            <person name="Thomas D.W."/>
            <person name="Thorpe A."/>
            <person name="Tracey A."/>
            <person name="Tromans A."/>
            <person name="Tubby B."/>
            <person name="Wall M."/>
            <person name="Wallis J.M."/>
            <person name="West A.P."/>
            <person name="White S.S."/>
            <person name="Whitehead S.L."/>
            <person name="Whittaker H."/>
            <person name="Wild A."/>
            <person name="Willey D.J."/>
            <person name="Wilmer T.E."/>
            <person name="Wood J.M."/>
            <person name="Wray P.W."/>
            <person name="Wyatt J.C."/>
            <person name="Young L."/>
            <person name="Younger R.M."/>
            <person name="Bentley D.R."/>
            <person name="Coulson A."/>
            <person name="Durbin R.M."/>
            <person name="Hubbard T."/>
            <person name="Sulston J.E."/>
            <person name="Dunham I."/>
            <person name="Rogers J."/>
            <person name="Beck S."/>
        </authorList>
    </citation>
    <scope>NUCLEOTIDE SEQUENCE [LARGE SCALE GENOMIC DNA]</scope>
</reference>
<reference key="6">
    <citation type="submission" date="2005-07" db="EMBL/GenBank/DDBJ databases">
        <authorList>
            <person name="Mural R.J."/>
            <person name="Istrail S."/>
            <person name="Sutton G.G."/>
            <person name="Florea L."/>
            <person name="Halpern A.L."/>
            <person name="Mobarry C.M."/>
            <person name="Lippert R."/>
            <person name="Walenz B."/>
            <person name="Shatkay H."/>
            <person name="Dew I."/>
            <person name="Miller J.R."/>
            <person name="Flanigan M.J."/>
            <person name="Edwards N.J."/>
            <person name="Bolanos R."/>
            <person name="Fasulo D."/>
            <person name="Halldorsson B.V."/>
            <person name="Hannenhalli S."/>
            <person name="Turner R."/>
            <person name="Yooseph S."/>
            <person name="Lu F."/>
            <person name="Nusskern D.R."/>
            <person name="Shue B.C."/>
            <person name="Zheng X.H."/>
            <person name="Zhong F."/>
            <person name="Delcher A.L."/>
            <person name="Huson D.H."/>
            <person name="Kravitz S.A."/>
            <person name="Mouchard L."/>
            <person name="Reinert K."/>
            <person name="Remington K.A."/>
            <person name="Clark A.G."/>
            <person name="Waterman M.S."/>
            <person name="Eichler E.E."/>
            <person name="Adams M.D."/>
            <person name="Hunkapiller M.W."/>
            <person name="Myers E.W."/>
            <person name="Venter J.C."/>
        </authorList>
    </citation>
    <scope>NUCLEOTIDE SEQUENCE [LARGE SCALE GENOMIC DNA]</scope>
</reference>
<reference key="7">
    <citation type="journal article" date="2004" name="Genome Res.">
        <title>The status, quality, and expansion of the NIH full-length cDNA project: the Mammalian Gene Collection (MGC).</title>
        <authorList>
            <consortium name="The MGC Project Team"/>
        </authorList>
    </citation>
    <scope>NUCLEOTIDE SEQUENCE [LARGE SCALE MRNA]</scope>
</reference>
<reference key="8">
    <citation type="journal article" date="2006" name="Protein Sci.">
        <title>Characterization of the five novel Ly-6 superfamily members encoded in the MHC, and detection of cells expressing their potential ligands.</title>
        <authorList>
            <person name="Mallya M."/>
            <person name="Campbell R.D."/>
            <person name="Aguado B."/>
        </authorList>
    </citation>
    <scope>GLYCOSYLATION</scope>
    <scope>SUBCELLULAR LOCATION</scope>
    <scope>SUBUNIT</scope>
    <scope>GPI-ANCHOR</scope>
</reference>
<comment type="subunit">
    <text evidence="4">Homodimer.</text>
</comment>
<comment type="interaction">
    <interactant intactId="EBI-12382527">
        <id>O95868</id>
    </interactant>
    <interactant intactId="EBI-354921">
        <id>P11021</id>
        <label>HSPA5</label>
    </interactant>
    <organismsDiffer>false</organismsDiffer>
    <experiments>2</experiments>
</comment>
<comment type="interaction">
    <interactant intactId="EBI-12382527">
        <id>O95868</id>
    </interactant>
    <interactant intactId="EBI-16439278">
        <id>Q6FHY5</id>
        <label>MEOX2</label>
    </interactant>
    <organismsDiffer>false</organismsDiffer>
    <experiments>3</experiments>
</comment>
<comment type="interaction">
    <interactant intactId="EBI-12382527">
        <id>O95868</id>
    </interactant>
    <interactant intactId="EBI-749635">
        <id>P61601</id>
        <label>NCALD</label>
    </interactant>
    <organismsDiffer>false</organismsDiffer>
    <experiments>3</experiments>
</comment>
<comment type="interaction">
    <interactant intactId="EBI-12382527">
        <id>O95868</id>
    </interactant>
    <interactant intactId="EBI-746987">
        <id>P62166</id>
        <label>NCS1</label>
    </interactant>
    <organismsDiffer>false</organismsDiffer>
    <experiments>3</experiments>
</comment>
<comment type="interaction">
    <interactant intactId="EBI-12382527">
        <id>O95868</id>
    </interactant>
    <interactant intactId="EBI-947187">
        <id>Q9UHD9</id>
        <label>UBQLN2</label>
    </interactant>
    <organismsDiffer>false</organismsDiffer>
    <experiments>3</experiments>
</comment>
<comment type="subcellular location">
    <subcellularLocation>
        <location evidence="4">Cell membrane</location>
        <topology evidence="4">Lipid-anchor</topology>
        <topology evidence="4">GPI-anchor</topology>
    </subcellularLocation>
    <subcellularLocation>
        <location evidence="4">Cell projection</location>
        <location evidence="4">Filopodium</location>
    </subcellularLocation>
</comment>
<comment type="tissue specificity">
    <text evidence="3">Expressed in the adult lung, and in fetal liver, lung, kidney, brain and spleen.</text>
</comment>
<comment type="PTM">
    <text evidence="4">O-glycosylated.</text>
</comment>
<dbReference type="EMBL" id="AJ315535">
    <property type="protein sequence ID" value="CAC85540.1"/>
    <property type="molecule type" value="mRNA"/>
</dbReference>
<dbReference type="EMBL" id="AJ012008">
    <property type="protein sequence ID" value="CAB46082.1"/>
    <property type="molecule type" value="Genomic_DNA"/>
</dbReference>
<dbReference type="EMBL" id="AF129756">
    <property type="protein sequence ID" value="AAD18077.1"/>
    <property type="molecule type" value="Genomic_DNA"/>
</dbReference>
<dbReference type="EMBL" id="BA000025">
    <property type="protein sequence ID" value="BAB63380.1"/>
    <property type="molecule type" value="Genomic_DNA"/>
</dbReference>
<dbReference type="EMBL" id="AL662899">
    <property type="status" value="NOT_ANNOTATED_CDS"/>
    <property type="molecule type" value="Genomic_DNA"/>
</dbReference>
<dbReference type="EMBL" id="AL670886">
    <property type="status" value="NOT_ANNOTATED_CDS"/>
    <property type="molecule type" value="Genomic_DNA"/>
</dbReference>
<dbReference type="EMBL" id="BX248244">
    <property type="status" value="NOT_ANNOTATED_CDS"/>
    <property type="molecule type" value="Genomic_DNA"/>
</dbReference>
<dbReference type="EMBL" id="AL844216">
    <property type="status" value="NOT_ANNOTATED_CDS"/>
    <property type="molecule type" value="Genomic_DNA"/>
</dbReference>
<dbReference type="EMBL" id="CR354443">
    <property type="status" value="NOT_ANNOTATED_CDS"/>
    <property type="molecule type" value="Genomic_DNA"/>
</dbReference>
<dbReference type="EMBL" id="CR759787">
    <property type="status" value="NOT_ANNOTATED_CDS"/>
    <property type="molecule type" value="Genomic_DNA"/>
</dbReference>
<dbReference type="EMBL" id="CR936239">
    <property type="status" value="NOT_ANNOTATED_CDS"/>
    <property type="molecule type" value="Genomic_DNA"/>
</dbReference>
<dbReference type="EMBL" id="CH471081">
    <property type="protein sequence ID" value="EAX03486.1"/>
    <property type="molecule type" value="Genomic_DNA"/>
</dbReference>
<dbReference type="EMBL" id="BC125138">
    <property type="protein sequence ID" value="AAI25139.1"/>
    <property type="molecule type" value="mRNA"/>
</dbReference>
<dbReference type="CCDS" id="CCDS34404.1"/>
<dbReference type="RefSeq" id="NP_067069.2">
    <property type="nucleotide sequence ID" value="NM_021246.4"/>
</dbReference>
<dbReference type="PDB" id="7S4G">
    <property type="method" value="X-ray"/>
    <property type="resolution" value="2.20 A"/>
    <property type="chains" value="G/I/J/K=95-103"/>
</dbReference>
<dbReference type="PDBsum" id="7S4G"/>
<dbReference type="SMR" id="O95868"/>
<dbReference type="BioGRID" id="121850">
    <property type="interactions" value="12"/>
</dbReference>
<dbReference type="FunCoup" id="O95868">
    <property type="interactions" value="2"/>
</dbReference>
<dbReference type="IntAct" id="O95868">
    <property type="interactions" value="8"/>
</dbReference>
<dbReference type="STRING" id="9606.ENSP00000364985"/>
<dbReference type="GlyCosmos" id="O95868">
    <property type="glycosylation" value="2 sites, No reported glycans"/>
</dbReference>
<dbReference type="GlyGen" id="O95868">
    <property type="glycosylation" value="2 sites"/>
</dbReference>
<dbReference type="iPTMnet" id="O95868"/>
<dbReference type="PhosphoSitePlus" id="O95868"/>
<dbReference type="BioMuta" id="LY6G6D"/>
<dbReference type="MassIVE" id="O95868"/>
<dbReference type="PaxDb" id="9606-ENSP00000364985"/>
<dbReference type="PeptideAtlas" id="O95868"/>
<dbReference type="Antibodypedia" id="50491">
    <property type="antibodies" value="107 antibodies from 13 providers"/>
</dbReference>
<dbReference type="DNASU" id="58530"/>
<dbReference type="Ensembl" id="ENST00000375825.8">
    <property type="protein sequence ID" value="ENSP00000364985.3"/>
    <property type="gene ID" value="ENSG00000244355.8"/>
</dbReference>
<dbReference type="Ensembl" id="ENST00000400080.7">
    <property type="protein sequence ID" value="ENSP00000382952.3"/>
    <property type="gene ID" value="ENSG00000206402.10"/>
</dbReference>
<dbReference type="Ensembl" id="ENST00000419389.6">
    <property type="protein sequence ID" value="ENSP00000389619.2"/>
    <property type="gene ID" value="ENSG00000226603.8"/>
</dbReference>
<dbReference type="Ensembl" id="ENST00000420378.6">
    <property type="protein sequence ID" value="ENSP00000397576.2"/>
    <property type="gene ID" value="ENSG00000234443.9"/>
</dbReference>
<dbReference type="Ensembl" id="ENST00000434515.6">
    <property type="protein sequence ID" value="ENSP00000392651.2"/>
    <property type="gene ID" value="ENSG00000235302.9"/>
</dbReference>
<dbReference type="Ensembl" id="ENST00000440095.6">
    <property type="protein sequence ID" value="ENSP00000390777.2"/>
    <property type="gene ID" value="ENSG00000225993.9"/>
</dbReference>
<dbReference type="Ensembl" id="ENST00000444880.6">
    <property type="protein sequence ID" value="ENSP00000395722.2"/>
    <property type="gene ID" value="ENSG00000236902.8"/>
</dbReference>
<dbReference type="GeneID" id="58530"/>
<dbReference type="KEGG" id="hsa:58530"/>
<dbReference type="MANE-Select" id="ENST00000375825.8">
    <property type="protein sequence ID" value="ENSP00000364985.3"/>
    <property type="RefSeq nucleotide sequence ID" value="NM_021246.4"/>
    <property type="RefSeq protein sequence ID" value="NP_067069.2"/>
</dbReference>
<dbReference type="UCSC" id="uc003nwf.1">
    <property type="organism name" value="human"/>
</dbReference>
<dbReference type="AGR" id="HGNC:13935"/>
<dbReference type="CTD" id="58530"/>
<dbReference type="DisGeNET" id="58530"/>
<dbReference type="GeneCards" id="LY6G6D"/>
<dbReference type="HGNC" id="HGNC:13935">
    <property type="gene designation" value="LY6G6D"/>
</dbReference>
<dbReference type="HPA" id="ENSG00000244355">
    <property type="expression patterns" value="Group enriched (seminal vesicle, skin)"/>
</dbReference>
<dbReference type="MIM" id="606038">
    <property type="type" value="gene"/>
</dbReference>
<dbReference type="neXtProt" id="NX_O95868"/>
<dbReference type="OpenTargets" id="ENSG00000244355"/>
<dbReference type="PharmGKB" id="PA37829"/>
<dbReference type="VEuPathDB" id="HostDB:ENSG00000244355"/>
<dbReference type="eggNOG" id="ENOG502SNF5">
    <property type="taxonomic scope" value="Eukaryota"/>
</dbReference>
<dbReference type="GeneTree" id="ENSGT00390000015960"/>
<dbReference type="HOGENOM" id="CLU_1824727_0_0_1"/>
<dbReference type="InParanoid" id="O95868"/>
<dbReference type="OMA" id="QHQPACV"/>
<dbReference type="OrthoDB" id="9436841at2759"/>
<dbReference type="PAN-GO" id="O95868">
    <property type="GO annotations" value="3 GO annotations based on evolutionary models"/>
</dbReference>
<dbReference type="PhylomeDB" id="O95868"/>
<dbReference type="PathwayCommons" id="O95868"/>
<dbReference type="Reactome" id="R-HSA-163125">
    <property type="pathway name" value="Post-translational modification: synthesis of GPI-anchored proteins"/>
</dbReference>
<dbReference type="SignaLink" id="O95868"/>
<dbReference type="BioGRID-ORCS" id="58530">
    <property type="hits" value="12 hits in 1137 CRISPR screens"/>
</dbReference>
<dbReference type="GenomeRNAi" id="58530"/>
<dbReference type="Pharos" id="O95868">
    <property type="development level" value="Tbio"/>
</dbReference>
<dbReference type="PRO" id="PR:O95868"/>
<dbReference type="Proteomes" id="UP000005640">
    <property type="component" value="Chromosome 6"/>
</dbReference>
<dbReference type="RNAct" id="O95868">
    <property type="molecule type" value="protein"/>
</dbReference>
<dbReference type="Bgee" id="ENSG00000244355">
    <property type="expression patterns" value="Expressed in male germ line stem cell (sensu Vertebrata) in testis and 79 other cell types or tissues"/>
</dbReference>
<dbReference type="ExpressionAtlas" id="O95868">
    <property type="expression patterns" value="baseline and differential"/>
</dbReference>
<dbReference type="GO" id="GO:0009897">
    <property type="term" value="C:external side of plasma membrane"/>
    <property type="evidence" value="ECO:0007669"/>
    <property type="project" value="Ensembl"/>
</dbReference>
<dbReference type="GO" id="GO:0005576">
    <property type="term" value="C:extracellular region"/>
    <property type="evidence" value="ECO:0000304"/>
    <property type="project" value="Reactome"/>
</dbReference>
<dbReference type="GO" id="GO:0030175">
    <property type="term" value="C:filopodium"/>
    <property type="evidence" value="ECO:0007669"/>
    <property type="project" value="UniProtKB-SubCell"/>
</dbReference>
<dbReference type="GO" id="GO:0005886">
    <property type="term" value="C:plasma membrane"/>
    <property type="evidence" value="ECO:0000304"/>
    <property type="project" value="Reactome"/>
</dbReference>
<dbReference type="GO" id="GO:0032991">
    <property type="term" value="C:protein-containing complex"/>
    <property type="evidence" value="ECO:0000314"/>
    <property type="project" value="UniProtKB"/>
</dbReference>
<dbReference type="GO" id="GO:0045202">
    <property type="term" value="C:synapse"/>
    <property type="evidence" value="ECO:0007669"/>
    <property type="project" value="GOC"/>
</dbReference>
<dbReference type="GO" id="GO:0030550">
    <property type="term" value="F:acetylcholine receptor inhibitor activity"/>
    <property type="evidence" value="ECO:0000318"/>
    <property type="project" value="GO_Central"/>
</dbReference>
<dbReference type="GO" id="GO:0042802">
    <property type="term" value="F:identical protein binding"/>
    <property type="evidence" value="ECO:0000314"/>
    <property type="project" value="UniProtKB"/>
</dbReference>
<dbReference type="GO" id="GO:0095500">
    <property type="term" value="P:acetylcholine receptor signaling pathway"/>
    <property type="evidence" value="ECO:0000318"/>
    <property type="project" value="GO_Central"/>
</dbReference>
<dbReference type="CDD" id="cd23547">
    <property type="entry name" value="TFP_LU_ECD_Ly6G6d"/>
    <property type="match status" value="1"/>
</dbReference>
<dbReference type="InterPro" id="IPR016054">
    <property type="entry name" value="LY6_UPA_recep-like"/>
</dbReference>
<dbReference type="InterPro" id="IPR026524">
    <property type="entry name" value="LY6G6d/LY6G6f"/>
</dbReference>
<dbReference type="PANTHER" id="PTHR32286:SF9">
    <property type="entry name" value="LYMPHOCYTE ANTIGEN 6 COMPLEX LOCUS PROTEIN G6D"/>
    <property type="match status" value="1"/>
</dbReference>
<dbReference type="PANTHER" id="PTHR32286">
    <property type="entry name" value="LYMPHOCYTE ANTIGEN 6 COMPLEX LOCUS PROTEIN G6F"/>
    <property type="match status" value="1"/>
</dbReference>
<dbReference type="Pfam" id="PF00021">
    <property type="entry name" value="UPAR_LY6"/>
    <property type="match status" value="1"/>
</dbReference>
<accession>O95868</accession>
<accession>A2BEY8</accession>
<accession>B0UXC1</accession>
<accession>B0V019</accession>
<accession>B0V1Y6</accession>
<accession>Q4VX50</accession>
<proteinExistence type="evidence at protein level"/>
<evidence type="ECO:0000250" key="1"/>
<evidence type="ECO:0000255" key="2"/>
<evidence type="ECO:0000269" key="3">
    <source>
    </source>
</evidence>
<evidence type="ECO:0000269" key="4">
    <source>
    </source>
</evidence>
<evidence type="ECO:0007829" key="5">
    <source>
        <dbReference type="PDB" id="7S4G"/>
    </source>
</evidence>
<organism>
    <name type="scientific">Homo sapiens</name>
    <name type="common">Human</name>
    <dbReference type="NCBI Taxonomy" id="9606"/>
    <lineage>
        <taxon>Eukaryota</taxon>
        <taxon>Metazoa</taxon>
        <taxon>Chordata</taxon>
        <taxon>Craniata</taxon>
        <taxon>Vertebrata</taxon>
        <taxon>Euteleostomi</taxon>
        <taxon>Mammalia</taxon>
        <taxon>Eutheria</taxon>
        <taxon>Euarchontoglires</taxon>
        <taxon>Primates</taxon>
        <taxon>Haplorrhini</taxon>
        <taxon>Catarrhini</taxon>
        <taxon>Hominidae</taxon>
        <taxon>Homo</taxon>
    </lineage>
</organism>
<protein>
    <recommendedName>
        <fullName>Lymphocyte antigen 6 complex locus protein G6d</fullName>
        <shortName>Protein Ly6-D</shortName>
    </recommendedName>
    <alternativeName>
        <fullName>Megakaryocyte-enhanced gene transcript 1 protein</fullName>
    </alternativeName>
</protein>
<gene>
    <name type="primary">LY6G6D</name>
    <name type="synonym">C6orf23</name>
    <name type="synonym">G6D</name>
    <name type="synonym">MEGT1</name>
    <name type="synonym">NG25</name>
</gene>
<keyword id="KW-0002">3D-structure</keyword>
<keyword id="KW-1003">Cell membrane</keyword>
<keyword id="KW-0966">Cell projection</keyword>
<keyword id="KW-1015">Disulfide bond</keyword>
<keyword id="KW-0325">Glycoprotein</keyword>
<keyword id="KW-0336">GPI-anchor</keyword>
<keyword id="KW-0449">Lipoprotein</keyword>
<keyword id="KW-0472">Membrane</keyword>
<keyword id="KW-1267">Proteomics identification</keyword>
<keyword id="KW-1185">Reference proteome</keyword>
<keyword id="KW-0732">Signal</keyword>
<sequence>MKPQFVGILLSSLLGAALGNRMRCYNCGGSPSSSCKEAVTTCGEGRPQPGLEQIKLPGNPPVTLIHQHPACVAAHHCNQVETESVGDVTYPAHRDCYLGDLCNSAVASHVAPAGILAAAATALTCLLPGLWSG</sequence>